<comment type="similarity">
    <text evidence="1">Belongs to the universal ribosomal protein uS2 family.</text>
</comment>
<dbReference type="EMBL" id="CP000512">
    <property type="protein sequence ID" value="ABM32407.1"/>
    <property type="molecule type" value="Genomic_DNA"/>
</dbReference>
<dbReference type="RefSeq" id="WP_011794953.1">
    <property type="nucleotide sequence ID" value="NC_008752.1"/>
</dbReference>
<dbReference type="SMR" id="A1TN69"/>
<dbReference type="STRING" id="397945.Aave_1823"/>
<dbReference type="GeneID" id="79793168"/>
<dbReference type="KEGG" id="aav:Aave_1823"/>
<dbReference type="eggNOG" id="COG0052">
    <property type="taxonomic scope" value="Bacteria"/>
</dbReference>
<dbReference type="HOGENOM" id="CLU_040318_1_2_4"/>
<dbReference type="OrthoDB" id="9808036at2"/>
<dbReference type="Proteomes" id="UP000002596">
    <property type="component" value="Chromosome"/>
</dbReference>
<dbReference type="GO" id="GO:0022627">
    <property type="term" value="C:cytosolic small ribosomal subunit"/>
    <property type="evidence" value="ECO:0007669"/>
    <property type="project" value="TreeGrafter"/>
</dbReference>
<dbReference type="GO" id="GO:0003735">
    <property type="term" value="F:structural constituent of ribosome"/>
    <property type="evidence" value="ECO:0007669"/>
    <property type="project" value="InterPro"/>
</dbReference>
<dbReference type="GO" id="GO:0006412">
    <property type="term" value="P:translation"/>
    <property type="evidence" value="ECO:0007669"/>
    <property type="project" value="UniProtKB-UniRule"/>
</dbReference>
<dbReference type="CDD" id="cd01425">
    <property type="entry name" value="RPS2"/>
    <property type="match status" value="1"/>
</dbReference>
<dbReference type="FunFam" id="1.10.287.610:FF:000001">
    <property type="entry name" value="30S ribosomal protein S2"/>
    <property type="match status" value="1"/>
</dbReference>
<dbReference type="Gene3D" id="3.40.50.10490">
    <property type="entry name" value="Glucose-6-phosphate isomerase like protein, domain 1"/>
    <property type="match status" value="1"/>
</dbReference>
<dbReference type="Gene3D" id="1.10.287.610">
    <property type="entry name" value="Helix hairpin bin"/>
    <property type="match status" value="1"/>
</dbReference>
<dbReference type="HAMAP" id="MF_00291_B">
    <property type="entry name" value="Ribosomal_uS2_B"/>
    <property type="match status" value="1"/>
</dbReference>
<dbReference type="InterPro" id="IPR001865">
    <property type="entry name" value="Ribosomal_uS2"/>
</dbReference>
<dbReference type="InterPro" id="IPR005706">
    <property type="entry name" value="Ribosomal_uS2_bac/mit/plastid"/>
</dbReference>
<dbReference type="InterPro" id="IPR018130">
    <property type="entry name" value="Ribosomal_uS2_CS"/>
</dbReference>
<dbReference type="InterPro" id="IPR023591">
    <property type="entry name" value="Ribosomal_uS2_flav_dom_sf"/>
</dbReference>
<dbReference type="NCBIfam" id="TIGR01011">
    <property type="entry name" value="rpsB_bact"/>
    <property type="match status" value="1"/>
</dbReference>
<dbReference type="PANTHER" id="PTHR12534">
    <property type="entry name" value="30S RIBOSOMAL PROTEIN S2 PROKARYOTIC AND ORGANELLAR"/>
    <property type="match status" value="1"/>
</dbReference>
<dbReference type="PANTHER" id="PTHR12534:SF0">
    <property type="entry name" value="SMALL RIBOSOMAL SUBUNIT PROTEIN US2M"/>
    <property type="match status" value="1"/>
</dbReference>
<dbReference type="Pfam" id="PF00318">
    <property type="entry name" value="Ribosomal_S2"/>
    <property type="match status" value="1"/>
</dbReference>
<dbReference type="PRINTS" id="PR00395">
    <property type="entry name" value="RIBOSOMALS2"/>
</dbReference>
<dbReference type="SUPFAM" id="SSF52313">
    <property type="entry name" value="Ribosomal protein S2"/>
    <property type="match status" value="1"/>
</dbReference>
<dbReference type="PROSITE" id="PS00962">
    <property type="entry name" value="RIBOSOMAL_S2_1"/>
    <property type="match status" value="1"/>
</dbReference>
<feature type="chain" id="PRO_1000003875" description="Small ribosomal subunit protein uS2">
    <location>
        <begin position="1"/>
        <end position="250"/>
    </location>
</feature>
<proteinExistence type="inferred from homology"/>
<reference key="1">
    <citation type="submission" date="2006-12" db="EMBL/GenBank/DDBJ databases">
        <title>Complete sequence of Acidovorax avenae subsp. citrulli AAC00-1.</title>
        <authorList>
            <person name="Copeland A."/>
            <person name="Lucas S."/>
            <person name="Lapidus A."/>
            <person name="Barry K."/>
            <person name="Detter J.C."/>
            <person name="Glavina del Rio T."/>
            <person name="Dalin E."/>
            <person name="Tice H."/>
            <person name="Pitluck S."/>
            <person name="Kiss H."/>
            <person name="Brettin T."/>
            <person name="Bruce D."/>
            <person name="Han C."/>
            <person name="Tapia R."/>
            <person name="Gilna P."/>
            <person name="Schmutz J."/>
            <person name="Larimer F."/>
            <person name="Land M."/>
            <person name="Hauser L."/>
            <person name="Kyrpides N."/>
            <person name="Kim E."/>
            <person name="Stahl D."/>
            <person name="Richardson P."/>
        </authorList>
    </citation>
    <scope>NUCLEOTIDE SEQUENCE [LARGE SCALE GENOMIC DNA]</scope>
    <source>
        <strain>AAC00-1</strain>
    </source>
</reference>
<evidence type="ECO:0000255" key="1">
    <source>
        <dbReference type="HAMAP-Rule" id="MF_00291"/>
    </source>
</evidence>
<evidence type="ECO:0000305" key="2"/>
<organism>
    <name type="scientific">Paracidovorax citrulli (strain AAC00-1)</name>
    <name type="common">Acidovorax citrulli</name>
    <dbReference type="NCBI Taxonomy" id="397945"/>
    <lineage>
        <taxon>Bacteria</taxon>
        <taxon>Pseudomonadati</taxon>
        <taxon>Pseudomonadota</taxon>
        <taxon>Betaproteobacteria</taxon>
        <taxon>Burkholderiales</taxon>
        <taxon>Comamonadaceae</taxon>
        <taxon>Paracidovorax</taxon>
    </lineage>
</organism>
<keyword id="KW-0687">Ribonucleoprotein</keyword>
<keyword id="KW-0689">Ribosomal protein</keyword>
<sequence length="250" mass="27545">MSVTMREMLEAGVHFGHQTRFWNPKMAPFIFGHRNKIHIINLEKSLPMFQEAQKFAKQLTANRGTILMVGTKRQARELLAAEAQRAGVPYVDQRWLGGMLTNFKTVKTSIKRLKDMKAQQEAGLESMSKKEQLTFTREIEKLEKDIGGIQDMNALPDAIFIIDVGFHKIAVAEAKKLGIPLIGVVDSNHSPEGIDYVIPGNDDSAKAVALYARGIADAIIEGRANAVNDVVKAAAPEGSDEFVEVEESAA</sequence>
<name>RS2_PARC0</name>
<accession>A1TN69</accession>
<protein>
    <recommendedName>
        <fullName evidence="1">Small ribosomal subunit protein uS2</fullName>
    </recommendedName>
    <alternativeName>
        <fullName evidence="2">30S ribosomal protein S2</fullName>
    </alternativeName>
</protein>
<gene>
    <name evidence="1" type="primary">rpsB</name>
    <name type="ordered locus">Aave_1823</name>
</gene>